<organism>
    <name type="scientific">Homo sapiens</name>
    <name type="common">Human</name>
    <dbReference type="NCBI Taxonomy" id="9606"/>
    <lineage>
        <taxon>Eukaryota</taxon>
        <taxon>Metazoa</taxon>
        <taxon>Chordata</taxon>
        <taxon>Craniata</taxon>
        <taxon>Vertebrata</taxon>
        <taxon>Euteleostomi</taxon>
        <taxon>Mammalia</taxon>
        <taxon>Eutheria</taxon>
        <taxon>Euarchontoglires</taxon>
        <taxon>Primates</taxon>
        <taxon>Haplorrhini</taxon>
        <taxon>Catarrhini</taxon>
        <taxon>Hominidae</taxon>
        <taxon>Homo</taxon>
    </lineage>
</organism>
<feature type="chain" id="PRO_0000122942" description="DNA repair protein RAD51 homolog 4">
    <location>
        <begin position="1"/>
        <end position="328"/>
    </location>
</feature>
<feature type="region of interest" description="preferentially binds ssDNA">
    <location>
        <begin position="1"/>
        <end position="83"/>
    </location>
</feature>
<feature type="binding site" evidence="1">
    <location>
        <begin position="107"/>
        <end position="114"/>
    </location>
    <ligand>
        <name>ATP</name>
        <dbReference type="ChEBI" id="CHEBI:30616"/>
    </ligand>
</feature>
<feature type="splice variant" id="VSP_043658" description="In isoform 8." evidence="16">
    <original>ALVALRRVLLAQFSAFPVNGADLYEELKTSTAILSTGIGS</original>
    <variation>TWRAHSSGNLGGLQLPQVPAGRSWSGVRNALKKAGLGHGGTDGLSLNAFDERGTAVSTSR</variation>
    <location>
        <begin position="49"/>
        <end position="88"/>
    </location>
</feature>
<feature type="splice variant" id="VSP_005558" description="In isoform 2." evidence="17">
    <original>A</original>
    <variation>S</variation>
    <location>
        <position position="49"/>
    </location>
</feature>
<feature type="splice variant" id="VSP_005559" description="In isoform 2." evidence="17">
    <location>
        <begin position="50"/>
        <end position="328"/>
    </location>
</feature>
<feature type="splice variant" id="VSP_005560" description="In isoform 3." evidence="17">
    <location>
        <begin position="50"/>
        <end position="161"/>
    </location>
</feature>
<feature type="splice variant" id="VSP_005563" description="In isoform 6." evidence="17">
    <original>SLDKLLDAGLYTGEVTEIVGGPGSGKTQVCL</original>
    <variation>RHGGRTQVGTWEDCSCLRSPQGDRGVGSGML</variation>
    <location>
        <begin position="88"/>
        <end position="118"/>
    </location>
</feature>
<feature type="splice variant" id="VSP_005562" description="In isoform 5." evidence="17">
    <original>SLDKLLDAGLYTGE</original>
    <variation>RQKLSGGSRWCMHL</variation>
    <location>
        <begin position="88"/>
        <end position="101"/>
    </location>
</feature>
<feature type="splice variant" id="VSP_005561" description="In isoform 4." evidence="17">
    <location>
        <begin position="116"/>
        <end position="160"/>
    </location>
</feature>
<feature type="splice variant" id="VSP_005564" description="In isoform 6." evidence="17">
    <location>
        <begin position="119"/>
        <end position="328"/>
    </location>
</feature>
<feature type="splice variant" id="VSP_005565" description="In isoform 7." evidence="17">
    <original>VTGSSGTVKVVVVDSVTAVV</original>
    <variation>DGIPEHLNHIPHCLHVHLPC</variation>
    <location>
        <begin position="193"/>
        <end position="212"/>
    </location>
</feature>
<feature type="splice variant" id="VSP_005566" description="In isoform 7." evidence="17">
    <location>
        <begin position="213"/>
        <end position="328"/>
    </location>
</feature>
<feature type="sequence variant" id="VAR_079271" description="In dbSNP:rs140825795." evidence="14">
    <original>C</original>
    <variation>S</variation>
    <location>
        <position position="9"/>
    </location>
</feature>
<feature type="sequence variant" id="VAR_020560" description="In dbSNP:rs28363257." evidence="15">
    <original>R</original>
    <variation>S</variation>
    <location>
        <position position="24"/>
    </location>
</feature>
<feature type="sequence variant" id="VAR_020561" description="In dbSNP:rs4796033." evidence="15">
    <original>R</original>
    <variation>Q</variation>
    <location>
        <position position="165"/>
    </location>
</feature>
<feature type="sequence variant" id="VAR_020562" description="In dbSNP:rs28363282." evidence="15">
    <original>A</original>
    <variation>T</variation>
    <location>
        <position position="225"/>
    </location>
</feature>
<feature type="sequence variant" id="VAR_020563" description="In dbSNP:rs28363283." evidence="15">
    <original>R</original>
    <variation>Q</variation>
    <location>
        <position position="232"/>
    </location>
</feature>
<feature type="sequence variant" id="VAR_020564" description="In dbSNP:rs28363284." evidence="15">
    <original>E</original>
    <variation>G</variation>
    <location>
        <position position="233"/>
    </location>
</feature>
<feature type="sequence conflict" description="In Ref. 9; CAB55937." evidence="17" ref="9">
    <original>A</original>
    <variation>V</variation>
    <location>
        <position position="231"/>
    </location>
</feature>
<feature type="helix" evidence="20">
    <location>
        <begin position="14"/>
        <end position="22"/>
    </location>
</feature>
<feature type="helix" evidence="20">
    <location>
        <begin position="28"/>
        <end position="32"/>
    </location>
</feature>
<feature type="helix" evidence="20">
    <location>
        <begin position="36"/>
        <end position="41"/>
    </location>
</feature>
<feature type="turn" evidence="20">
    <location>
        <begin position="42"/>
        <end position="44"/>
    </location>
</feature>
<feature type="helix" evidence="20">
    <location>
        <begin position="47"/>
        <end position="61"/>
    </location>
</feature>
<feature type="helix" evidence="20">
    <location>
        <begin position="68"/>
        <end position="78"/>
    </location>
</feature>
<feature type="helix" evidence="20">
    <location>
        <begin position="87"/>
        <end position="93"/>
    </location>
</feature>
<feature type="strand" evidence="20">
    <location>
        <begin position="95"/>
        <end position="98"/>
    </location>
</feature>
<feature type="strand" evidence="20">
    <location>
        <begin position="101"/>
        <end position="106"/>
    </location>
</feature>
<feature type="helix" evidence="20">
    <location>
        <begin position="113"/>
        <end position="126"/>
    </location>
</feature>
<feature type="strand" evidence="20">
    <location>
        <begin position="132"/>
        <end position="139"/>
    </location>
</feature>
<feature type="helix" evidence="20">
    <location>
        <begin position="143"/>
        <end position="151"/>
    </location>
</feature>
<feature type="helix" evidence="20">
    <location>
        <begin position="157"/>
        <end position="165"/>
    </location>
</feature>
<feature type="strand" evidence="20">
    <location>
        <begin position="166"/>
        <end position="171"/>
    </location>
</feature>
<feature type="helix" evidence="20">
    <location>
        <begin position="175"/>
        <end position="191"/>
    </location>
</feature>
<feature type="strand" evidence="20">
    <location>
        <begin position="202"/>
        <end position="206"/>
    </location>
</feature>
<feature type="helix" evidence="20">
    <location>
        <begin position="208"/>
        <end position="212"/>
    </location>
</feature>
<feature type="helix" evidence="20">
    <location>
        <begin position="213"/>
        <end position="215"/>
    </location>
</feature>
<feature type="strand" evidence="19">
    <location>
        <begin position="216"/>
        <end position="219"/>
    </location>
</feature>
<feature type="helix" evidence="20">
    <location>
        <begin position="222"/>
        <end position="239"/>
    </location>
</feature>
<feature type="turn" evidence="18">
    <location>
        <begin position="240"/>
        <end position="242"/>
    </location>
</feature>
<feature type="strand" evidence="20">
    <location>
        <begin position="244"/>
        <end position="249"/>
    </location>
</feature>
<feature type="strand" evidence="20">
    <location>
        <begin position="251"/>
        <end position="253"/>
    </location>
</feature>
<feature type="strand" evidence="20">
    <location>
        <begin position="255"/>
        <end position="257"/>
    </location>
</feature>
<feature type="strand" evidence="20">
    <location>
        <begin position="259"/>
        <end position="264"/>
    </location>
</feature>
<feature type="helix" evidence="20">
    <location>
        <begin position="266"/>
        <end position="269"/>
    </location>
</feature>
<feature type="strand" evidence="20">
    <location>
        <begin position="273"/>
        <end position="280"/>
    </location>
</feature>
<feature type="strand" evidence="20">
    <location>
        <begin position="291"/>
        <end position="297"/>
    </location>
</feature>
<feature type="strand" evidence="20">
    <location>
        <begin position="299"/>
        <end position="301"/>
    </location>
</feature>
<feature type="strand" evidence="20">
    <location>
        <begin position="306"/>
        <end position="309"/>
    </location>
</feature>
<feature type="turn" evidence="20">
    <location>
        <begin position="311"/>
        <end position="313"/>
    </location>
</feature>
<dbReference type="EMBL" id="Y15572">
    <property type="protein sequence ID" value="CAA75681.1"/>
    <property type="molecule type" value="mRNA"/>
</dbReference>
<dbReference type="EMBL" id="AF034956">
    <property type="protein sequence ID" value="AAC39719.1"/>
    <property type="molecule type" value="mRNA"/>
</dbReference>
<dbReference type="EMBL" id="AB013341">
    <property type="protein sequence ID" value="BAA25914.1"/>
    <property type="molecule type" value="mRNA"/>
</dbReference>
<dbReference type="EMBL" id="AB016223">
    <property type="protein sequence ID" value="BAA31747.1"/>
    <property type="molecule type" value="mRNA"/>
</dbReference>
<dbReference type="EMBL" id="AB016224">
    <property type="protein sequence ID" value="BAA31748.1"/>
    <property type="molecule type" value="mRNA"/>
</dbReference>
<dbReference type="EMBL" id="AB016225">
    <property type="protein sequence ID" value="BAA31749.1"/>
    <property type="molecule type" value="mRNA"/>
</dbReference>
<dbReference type="EMBL" id="AB018360">
    <property type="protein sequence ID" value="BAA33779.1"/>
    <property type="molecule type" value="mRNA"/>
</dbReference>
<dbReference type="EMBL" id="AB018361">
    <property type="protein sequence ID" value="BAA33780.1"/>
    <property type="molecule type" value="mRNA"/>
</dbReference>
<dbReference type="EMBL" id="AB018362">
    <property type="protein sequence ID" value="BAA33781.1"/>
    <property type="molecule type" value="mRNA"/>
</dbReference>
<dbReference type="EMBL" id="AB018363">
    <property type="protein sequence ID" value="BAA33782.1"/>
    <property type="molecule type" value="mRNA"/>
</dbReference>
<dbReference type="EMBL" id="AB020412">
    <property type="protein sequence ID" value="BAA34690.1"/>
    <property type="molecule type" value="mRNA"/>
</dbReference>
<dbReference type="EMBL" id="AY623116">
    <property type="protein sequence ID" value="AAT38112.1"/>
    <property type="molecule type" value="Genomic_DNA"/>
</dbReference>
<dbReference type="EMBL" id="AK296241">
    <property type="protein sequence ID" value="BAG58959.1"/>
    <property type="molecule type" value="mRNA"/>
</dbReference>
<dbReference type="EMBL" id="AC022916">
    <property type="status" value="NOT_ANNOTATED_CDS"/>
    <property type="molecule type" value="Genomic_DNA"/>
</dbReference>
<dbReference type="EMBL" id="CH471147">
    <property type="protein sequence ID" value="EAW80181.1"/>
    <property type="molecule type" value="Genomic_DNA"/>
</dbReference>
<dbReference type="EMBL" id="CH471147">
    <property type="protein sequence ID" value="EAW80184.1"/>
    <property type="molecule type" value="Genomic_DNA"/>
</dbReference>
<dbReference type="EMBL" id="CH471147">
    <property type="protein sequence ID" value="EAW80196.1"/>
    <property type="molecule type" value="Genomic_DNA"/>
</dbReference>
<dbReference type="EMBL" id="BC014422">
    <property type="protein sequence ID" value="AAH14422.1"/>
    <property type="molecule type" value="mRNA"/>
</dbReference>
<dbReference type="EMBL" id="AL117459">
    <property type="protein sequence ID" value="CAB55937.1"/>
    <property type="molecule type" value="mRNA"/>
</dbReference>
<dbReference type="CCDS" id="CCDS11287.1">
    <molecule id="O75771-1"/>
</dbReference>
<dbReference type="CCDS" id="CCDS11288.1">
    <molecule id="O75771-3"/>
</dbReference>
<dbReference type="CCDS" id="CCDS45646.1">
    <molecule id="O75771-8"/>
</dbReference>
<dbReference type="PIR" id="T17247">
    <property type="entry name" value="T17247"/>
</dbReference>
<dbReference type="RefSeq" id="NP_001136043.1">
    <molecule id="O75771-8"/>
    <property type="nucleotide sequence ID" value="NM_001142571.2"/>
</dbReference>
<dbReference type="RefSeq" id="NP_002869.3">
    <molecule id="O75771-1"/>
    <property type="nucleotide sequence ID" value="NM_002878.3"/>
</dbReference>
<dbReference type="RefSeq" id="NP_598332.1">
    <molecule id="O75771-3"/>
    <property type="nucleotide sequence ID" value="NM_133629.3"/>
</dbReference>
<dbReference type="PDB" id="2KZ3">
    <property type="method" value="NMR"/>
    <property type="chains" value="A=1-83"/>
</dbReference>
<dbReference type="PDB" id="8FAZ">
    <property type="method" value="EM"/>
    <property type="resolution" value="2.30 A"/>
    <property type="chains" value="D=1-328"/>
</dbReference>
<dbReference type="PDB" id="8GBJ">
    <property type="method" value="EM"/>
    <property type="resolution" value="3.11 A"/>
    <property type="chains" value="D=1-328"/>
</dbReference>
<dbReference type="PDB" id="8OUY">
    <property type="method" value="EM"/>
    <property type="resolution" value="3.40 A"/>
    <property type="chains" value="C=1-328"/>
</dbReference>
<dbReference type="PDB" id="8OUZ">
    <property type="method" value="EM"/>
    <property type="resolution" value="2.20 A"/>
    <property type="chains" value="C=1-328"/>
</dbReference>
<dbReference type="PDBsum" id="2KZ3"/>
<dbReference type="PDBsum" id="8FAZ"/>
<dbReference type="PDBsum" id="8GBJ"/>
<dbReference type="PDBsum" id="8OUY"/>
<dbReference type="PDBsum" id="8OUZ"/>
<dbReference type="BMRB" id="O75771"/>
<dbReference type="EMDB" id="EMD-17205"/>
<dbReference type="EMDB" id="EMD-17206"/>
<dbReference type="EMDB" id="EMD-28961"/>
<dbReference type="EMDB" id="EMD-29917"/>
<dbReference type="SMR" id="O75771"/>
<dbReference type="BioGRID" id="111829">
    <property type="interactions" value="106"/>
</dbReference>
<dbReference type="ComplexPortal" id="CPX-2363">
    <property type="entry name" value="BCDX2 complex"/>
</dbReference>
<dbReference type="CORUM" id="O75771"/>
<dbReference type="DIP" id="DIP-24265N"/>
<dbReference type="FunCoup" id="O75771">
    <property type="interactions" value="1618"/>
</dbReference>
<dbReference type="IntAct" id="O75771">
    <property type="interactions" value="88"/>
</dbReference>
<dbReference type="MINT" id="O75771"/>
<dbReference type="STRING" id="9606.ENSP00000466399"/>
<dbReference type="iPTMnet" id="O75771"/>
<dbReference type="PhosphoSitePlus" id="O75771"/>
<dbReference type="BioMuta" id="RAD51D"/>
<dbReference type="jPOST" id="O75771"/>
<dbReference type="MassIVE" id="O75771"/>
<dbReference type="PeptideAtlas" id="O75771"/>
<dbReference type="ProteomicsDB" id="50183">
    <molecule id="O75771-1"/>
</dbReference>
<dbReference type="ProteomicsDB" id="50184">
    <molecule id="O75771-2"/>
</dbReference>
<dbReference type="ProteomicsDB" id="50185">
    <molecule id="O75771-3"/>
</dbReference>
<dbReference type="ProteomicsDB" id="50186">
    <molecule id="O75771-4"/>
</dbReference>
<dbReference type="ProteomicsDB" id="50187">
    <molecule id="O75771-5"/>
</dbReference>
<dbReference type="ProteomicsDB" id="50188">
    <molecule id="O75771-6"/>
</dbReference>
<dbReference type="ProteomicsDB" id="50189">
    <molecule id="O75771-7"/>
</dbReference>
<dbReference type="ProteomicsDB" id="50190">
    <molecule id="O75771-8"/>
</dbReference>
<dbReference type="Pumba" id="O75771"/>
<dbReference type="Antibodypedia" id="15549">
    <property type="antibodies" value="373 antibodies from 34 providers"/>
</dbReference>
<dbReference type="DNASU" id="5892"/>
<dbReference type="Ensembl" id="ENST00000335858.11">
    <molecule id="O75771-3"/>
    <property type="protein sequence ID" value="ENSP00000338408.6"/>
    <property type="gene ID" value="ENSG00000185379.21"/>
</dbReference>
<dbReference type="Ensembl" id="ENST00000345365.11">
    <molecule id="O75771-1"/>
    <property type="protein sequence ID" value="ENSP00000338790.6"/>
    <property type="gene ID" value="ENSG00000185379.21"/>
</dbReference>
<dbReference type="Ensembl" id="ENST00000394589.8">
    <molecule id="O75771-1"/>
    <property type="protein sequence ID" value="ENSP00000378090.4"/>
    <property type="gene ID" value="ENSG00000185379.21"/>
</dbReference>
<dbReference type="Ensembl" id="ENST00000586044.5">
    <molecule id="O75771-2"/>
    <property type="protein sequence ID" value="ENSP00000465584.1"/>
    <property type="gene ID" value="ENSG00000185379.21"/>
</dbReference>
<dbReference type="Ensembl" id="ENST00000586186.3">
    <molecule id="O75771-4"/>
    <property type="protein sequence ID" value="ENSP00000468273.3"/>
    <property type="gene ID" value="ENSG00000185379.21"/>
</dbReference>
<dbReference type="Ensembl" id="ENST00000587977.5">
    <molecule id="O75771-6"/>
    <property type="protein sequence ID" value="ENSP00000466587.1"/>
    <property type="gene ID" value="ENSG00000185379.21"/>
</dbReference>
<dbReference type="Ensembl" id="ENST00000588594.5">
    <molecule id="O75771-2"/>
    <property type="protein sequence ID" value="ENSP00000465366.1"/>
    <property type="gene ID" value="ENSG00000185379.21"/>
</dbReference>
<dbReference type="Ensembl" id="ENST00000590016.6">
    <molecule id="O75771-8"/>
    <property type="protein sequence ID" value="ENSP00000466399.1"/>
    <property type="gene ID" value="ENSG00000185379.21"/>
</dbReference>
<dbReference type="GeneID" id="5892"/>
<dbReference type="KEGG" id="hsa:5892"/>
<dbReference type="MANE-Select" id="ENST00000345365.11">
    <property type="protein sequence ID" value="ENSP00000338790.6"/>
    <property type="RefSeq nucleotide sequence ID" value="NM_002878.4"/>
    <property type="RefSeq protein sequence ID" value="NP_002869.3"/>
</dbReference>
<dbReference type="UCSC" id="uc002hir.4">
    <molecule id="O75771-1"/>
    <property type="organism name" value="human"/>
</dbReference>
<dbReference type="AGR" id="HGNC:9823"/>
<dbReference type="CTD" id="5892"/>
<dbReference type="DisGeNET" id="5892"/>
<dbReference type="GeneCards" id="RAD51D"/>
<dbReference type="HGNC" id="HGNC:9823">
    <property type="gene designation" value="RAD51D"/>
</dbReference>
<dbReference type="HPA" id="ENSG00000185379">
    <property type="expression patterns" value="Low tissue specificity"/>
</dbReference>
<dbReference type="MalaCards" id="RAD51D"/>
<dbReference type="MIM" id="602954">
    <property type="type" value="gene"/>
</dbReference>
<dbReference type="MIM" id="614291">
    <property type="type" value="phenotype"/>
</dbReference>
<dbReference type="neXtProt" id="NX_O75771"/>
<dbReference type="OpenTargets" id="ENSG00000185379"/>
<dbReference type="Orphanet" id="1331">
    <property type="disease" value="Familial prostate cancer"/>
</dbReference>
<dbReference type="Orphanet" id="145">
    <property type="disease" value="Hereditary breast and/or ovarian cancer syndrome"/>
</dbReference>
<dbReference type="PharmGKB" id="PA34179"/>
<dbReference type="VEuPathDB" id="HostDB:ENSG00000185379"/>
<dbReference type="eggNOG" id="KOG1433">
    <property type="taxonomic scope" value="Eukaryota"/>
</dbReference>
<dbReference type="eggNOG" id="KOG4275">
    <property type="taxonomic scope" value="Eukaryota"/>
</dbReference>
<dbReference type="GeneTree" id="ENSGT00940000159095"/>
<dbReference type="HOGENOM" id="CLU_058452_0_0_1"/>
<dbReference type="InParanoid" id="O75771"/>
<dbReference type="OMA" id="QRIHTFR"/>
<dbReference type="OrthoDB" id="336321at2759"/>
<dbReference type="PAN-GO" id="O75771">
    <property type="GO annotations" value="10 GO annotations based on evolutionary models"/>
</dbReference>
<dbReference type="PhylomeDB" id="O75771"/>
<dbReference type="PathwayCommons" id="O75771"/>
<dbReference type="Reactome" id="R-HSA-5685942">
    <property type="pathway name" value="HDR through Homologous Recombination (HRR)"/>
</dbReference>
<dbReference type="Reactome" id="R-HSA-5693554">
    <property type="pathway name" value="Resolution of D-loop Structures through Synthesis-Dependent Strand Annealing (SDSA)"/>
</dbReference>
<dbReference type="Reactome" id="R-HSA-5693568">
    <property type="pathway name" value="Resolution of D-loop Structures through Holliday Junction Intermediates"/>
</dbReference>
<dbReference type="Reactome" id="R-HSA-5693579">
    <property type="pathway name" value="Homologous DNA Pairing and Strand Exchange"/>
</dbReference>
<dbReference type="Reactome" id="R-HSA-5693616">
    <property type="pathway name" value="Presynaptic phase of homologous DNA pairing and strand exchange"/>
</dbReference>
<dbReference type="Reactome" id="R-HSA-6796648">
    <property type="pathway name" value="TP53 Regulates Transcription of DNA Repair Genes"/>
</dbReference>
<dbReference type="Reactome" id="R-HSA-9701192">
    <property type="pathway name" value="Defective homologous recombination repair (HRR) due to BRCA1 loss of function"/>
</dbReference>
<dbReference type="Reactome" id="R-HSA-9704331">
    <property type="pathway name" value="Defective HDR through Homologous Recombination Repair (HRR) due to PALB2 loss of BRCA1 binding function"/>
</dbReference>
<dbReference type="Reactome" id="R-HSA-9704646">
    <property type="pathway name" value="Defective HDR through Homologous Recombination Repair (HRR) due to PALB2 loss of BRCA2/RAD51/RAD51C binding function"/>
</dbReference>
<dbReference type="Reactome" id="R-HSA-9709603">
    <property type="pathway name" value="Impaired BRCA2 binding to PALB2"/>
</dbReference>
<dbReference type="SignaLink" id="O75771"/>
<dbReference type="BioGRID-ORCS" id="5892">
    <property type="hits" value="497 hits in 1178 CRISPR screens"/>
</dbReference>
<dbReference type="EvolutionaryTrace" id="O75771"/>
<dbReference type="GeneWiki" id="RAD51L3"/>
<dbReference type="GenomeRNAi" id="5892"/>
<dbReference type="Pharos" id="O75771">
    <property type="development level" value="Tbio"/>
</dbReference>
<dbReference type="PRO" id="PR:O75771"/>
<dbReference type="Proteomes" id="UP000005640">
    <property type="component" value="Chromosome 17"/>
</dbReference>
<dbReference type="RNAct" id="O75771">
    <property type="molecule type" value="protein"/>
</dbReference>
<dbReference type="Bgee" id="ENSG00000185379">
    <property type="expression patterns" value="Expressed in sperm and 114 other cell types or tissues"/>
</dbReference>
<dbReference type="ExpressionAtlas" id="O75771">
    <property type="expression patterns" value="baseline and differential"/>
</dbReference>
<dbReference type="GO" id="GO:0005813">
    <property type="term" value="C:centrosome"/>
    <property type="evidence" value="ECO:0000314"/>
    <property type="project" value="UniProtKB"/>
</dbReference>
<dbReference type="GO" id="GO:0000781">
    <property type="term" value="C:chromosome, telomeric region"/>
    <property type="evidence" value="ECO:0000314"/>
    <property type="project" value="UniProtKB"/>
</dbReference>
<dbReference type="GO" id="GO:0005737">
    <property type="term" value="C:cytoplasm"/>
    <property type="evidence" value="ECO:0007669"/>
    <property type="project" value="UniProtKB-KW"/>
</dbReference>
<dbReference type="GO" id="GO:0005815">
    <property type="term" value="C:microtubule organizing center"/>
    <property type="evidence" value="ECO:0000318"/>
    <property type="project" value="GO_Central"/>
</dbReference>
<dbReference type="GO" id="GO:0005654">
    <property type="term" value="C:nucleoplasm"/>
    <property type="evidence" value="ECO:0000304"/>
    <property type="project" value="Reactome"/>
</dbReference>
<dbReference type="GO" id="GO:0005634">
    <property type="term" value="C:nucleus"/>
    <property type="evidence" value="ECO:0000304"/>
    <property type="project" value="ProtInc"/>
</dbReference>
<dbReference type="GO" id="GO:0033063">
    <property type="term" value="C:Rad51B-Rad51C-Rad51D-XRCC2 complex"/>
    <property type="evidence" value="ECO:0000314"/>
    <property type="project" value="UniProtKB"/>
</dbReference>
<dbReference type="GO" id="GO:0005657">
    <property type="term" value="C:replication fork"/>
    <property type="evidence" value="ECO:0000314"/>
    <property type="project" value="UniProtKB"/>
</dbReference>
<dbReference type="GO" id="GO:0005524">
    <property type="term" value="F:ATP binding"/>
    <property type="evidence" value="ECO:0007669"/>
    <property type="project" value="UniProtKB-KW"/>
</dbReference>
<dbReference type="GO" id="GO:0016887">
    <property type="term" value="F:ATP hydrolysis activity"/>
    <property type="evidence" value="ECO:0007669"/>
    <property type="project" value="InterPro"/>
</dbReference>
<dbReference type="GO" id="GO:0008094">
    <property type="term" value="F:ATP-dependent activity, acting on DNA"/>
    <property type="evidence" value="ECO:0000314"/>
    <property type="project" value="UniProtKB"/>
</dbReference>
<dbReference type="GO" id="GO:0140664">
    <property type="term" value="F:ATP-dependent DNA damage sensor activity"/>
    <property type="evidence" value="ECO:0000315"/>
    <property type="project" value="FlyBase"/>
</dbReference>
<dbReference type="GO" id="GO:0003677">
    <property type="term" value="F:DNA binding"/>
    <property type="evidence" value="ECO:0000304"/>
    <property type="project" value="ProtInc"/>
</dbReference>
<dbReference type="GO" id="GO:0043015">
    <property type="term" value="F:gamma-tubulin binding"/>
    <property type="evidence" value="ECO:0000314"/>
    <property type="project" value="UniProtKB"/>
</dbReference>
<dbReference type="GO" id="GO:0003697">
    <property type="term" value="F:single-stranded DNA binding"/>
    <property type="evidence" value="ECO:0000314"/>
    <property type="project" value="UniProtKB"/>
</dbReference>
<dbReference type="GO" id="GO:0006281">
    <property type="term" value="P:DNA repair"/>
    <property type="evidence" value="ECO:0000304"/>
    <property type="project" value="ProtInc"/>
</dbReference>
<dbReference type="GO" id="GO:0042148">
    <property type="term" value="P:DNA strand invasion"/>
    <property type="evidence" value="ECO:0000314"/>
    <property type="project" value="UniProtKB"/>
</dbReference>
<dbReference type="GO" id="GO:0000724">
    <property type="term" value="P:double-strand break repair via homologous recombination"/>
    <property type="evidence" value="ECO:0000315"/>
    <property type="project" value="UniProtKB"/>
</dbReference>
<dbReference type="GO" id="GO:0036297">
    <property type="term" value="P:interstrand cross-link repair"/>
    <property type="evidence" value="ECO:0007669"/>
    <property type="project" value="Ensembl"/>
</dbReference>
<dbReference type="GO" id="GO:0007131">
    <property type="term" value="P:reciprocal meiotic recombination"/>
    <property type="evidence" value="ECO:0000318"/>
    <property type="project" value="GO_Central"/>
</dbReference>
<dbReference type="GO" id="GO:0051726">
    <property type="term" value="P:regulation of cell cycle"/>
    <property type="evidence" value="ECO:0007669"/>
    <property type="project" value="Ensembl"/>
</dbReference>
<dbReference type="GO" id="GO:0000723">
    <property type="term" value="P:telomere maintenance"/>
    <property type="evidence" value="ECO:0000315"/>
    <property type="project" value="UniProtKB"/>
</dbReference>
<dbReference type="GO" id="GO:0000722">
    <property type="term" value="P:telomere maintenance via recombination"/>
    <property type="evidence" value="ECO:0000315"/>
    <property type="project" value="BHF-UCL"/>
</dbReference>
<dbReference type="CDD" id="cd19489">
    <property type="entry name" value="Rad51D"/>
    <property type="match status" value="1"/>
</dbReference>
<dbReference type="FunFam" id="3.40.50.300:FF:001042">
    <property type="entry name" value="DNA repair protein RAD51 homolog 4"/>
    <property type="match status" value="1"/>
</dbReference>
<dbReference type="Gene3D" id="3.40.50.300">
    <property type="entry name" value="P-loop containing nucleotide triphosphate hydrolases"/>
    <property type="match status" value="1"/>
</dbReference>
<dbReference type="InterPro" id="IPR003593">
    <property type="entry name" value="AAA+_ATPase"/>
</dbReference>
<dbReference type="InterPro" id="IPR013632">
    <property type="entry name" value="DNA_recomb/repair_Rad51_C"/>
</dbReference>
<dbReference type="InterPro" id="IPR016467">
    <property type="entry name" value="DNA_recomb/repair_RecA-like"/>
</dbReference>
<dbReference type="InterPro" id="IPR051988">
    <property type="entry name" value="HRR_RAD51_Paralog"/>
</dbReference>
<dbReference type="InterPro" id="IPR027417">
    <property type="entry name" value="P-loop_NTPase"/>
</dbReference>
<dbReference type="InterPro" id="IPR047323">
    <property type="entry name" value="Rad51D_C"/>
</dbReference>
<dbReference type="InterPro" id="IPR048943">
    <property type="entry name" value="RAD51D_N"/>
</dbReference>
<dbReference type="InterPro" id="IPR020588">
    <property type="entry name" value="RecA_ATP-bd"/>
</dbReference>
<dbReference type="PANTHER" id="PTHR46457">
    <property type="entry name" value="DNA REPAIR PROTEIN RAD51 HOMOLOG 4"/>
    <property type="match status" value="1"/>
</dbReference>
<dbReference type="PANTHER" id="PTHR46457:SF1">
    <property type="entry name" value="DNA REPAIR PROTEIN RAD51 HOMOLOG 4"/>
    <property type="match status" value="1"/>
</dbReference>
<dbReference type="Pfam" id="PF08423">
    <property type="entry name" value="Rad51"/>
    <property type="match status" value="1"/>
</dbReference>
<dbReference type="Pfam" id="PF21794">
    <property type="entry name" value="RAD51D_N"/>
    <property type="match status" value="1"/>
</dbReference>
<dbReference type="PIRSF" id="PIRSF005856">
    <property type="entry name" value="Rad51"/>
    <property type="match status" value="1"/>
</dbReference>
<dbReference type="SMART" id="SM00382">
    <property type="entry name" value="AAA"/>
    <property type="match status" value="1"/>
</dbReference>
<dbReference type="SUPFAM" id="SSF52540">
    <property type="entry name" value="P-loop containing nucleoside triphosphate hydrolases"/>
    <property type="match status" value="1"/>
</dbReference>
<dbReference type="PROSITE" id="PS50162">
    <property type="entry name" value="RECA_2"/>
    <property type="match status" value="1"/>
</dbReference>
<evidence type="ECO:0000255" key="1"/>
<evidence type="ECO:0000269" key="2">
    <source>
    </source>
</evidence>
<evidence type="ECO:0000269" key="3">
    <source>
    </source>
</evidence>
<evidence type="ECO:0000269" key="4">
    <source>
    </source>
</evidence>
<evidence type="ECO:0000269" key="5">
    <source>
    </source>
</evidence>
<evidence type="ECO:0000269" key="6">
    <source>
    </source>
</evidence>
<evidence type="ECO:0000269" key="7">
    <source>
    </source>
</evidence>
<evidence type="ECO:0000269" key="8">
    <source>
    </source>
</evidence>
<evidence type="ECO:0000269" key="9">
    <source>
    </source>
</evidence>
<evidence type="ECO:0000269" key="10">
    <source>
    </source>
</evidence>
<evidence type="ECO:0000269" key="11">
    <source>
    </source>
</evidence>
<evidence type="ECO:0000269" key="12">
    <source>
    </source>
</evidence>
<evidence type="ECO:0000269" key="13">
    <source>
    </source>
</evidence>
<evidence type="ECO:0000269" key="14">
    <source>
    </source>
</evidence>
<evidence type="ECO:0000269" key="15">
    <source ref="4"/>
</evidence>
<evidence type="ECO:0000303" key="16">
    <source>
    </source>
</evidence>
<evidence type="ECO:0000305" key="17"/>
<evidence type="ECO:0007829" key="18">
    <source>
        <dbReference type="PDB" id="8FAZ"/>
    </source>
</evidence>
<evidence type="ECO:0007829" key="19">
    <source>
        <dbReference type="PDB" id="8GBJ"/>
    </source>
</evidence>
<evidence type="ECO:0007829" key="20">
    <source>
        <dbReference type="PDB" id="8OUZ"/>
    </source>
</evidence>
<comment type="function">
    <text evidence="2 4 5 7 8 9 13">Involved in the homologous recombination repair (HRR) pathway of double-stranded DNA breaks arising during DNA replication or induced by DNA-damaging agents. Bind to single-stranded DNA (ssDNA) and has DNA-dependent ATPase activity. Part of the RAD51 paralog protein complex BCDX2 which acts in the BRCA1-BRCA2-dependent HR pathway. Upon DNA damage, BCDX2 acts downstream of BRCA2 recruitment and upstream of RAD51 recruitment. BCDX2 binds predominantly to the intersection of the four duplex arms of the Holliday junction and to junction of replication forks. The BCDX2 complex was originally reported to bind single-stranded DNA, single-stranded gaps in duplex DNA and specifically to nicks in duplex DNA. Involved in telomere maintenance. The BCDX2 subcomplex XRCC2:RAD51D can stimulate Holliday junction resolution by BLM.</text>
</comment>
<comment type="subunit">
    <text evidence="2 3 4 5 6 7 8 10 12">Part of the BCDX2 complex consisting of RAD51B, RAD51C, RAD51D and XRCC2; the complex has a ring-like structure arranged into a flat disc around a central channel. In the absence of DNA, the BCDX2 subcomplex XRCC2:RAD51D formed a multimeric ring structure; in the presence of single-stranded DNA it formed a filamentous structure with the ssDNA. Interacts with SWSAP1 and ZSWIM7; involved in homologous recombination repair. Interacts with BLM; required for stimulation of BLM activity by the BCDX2 subcomplex XRCC2:RAD51D.</text>
</comment>
<comment type="interaction">
    <interactant intactId="EBI-1055693">
        <id>O75771</id>
    </interactant>
    <interactant intactId="EBI-746752">
        <id>Q9Y2J4</id>
        <label>AMOTL2</label>
    </interactant>
    <organismsDiffer>false</organismsDiffer>
    <experiments>8</experiments>
</comment>
<comment type="interaction">
    <interactant intactId="EBI-1055693">
        <id>O75771</id>
    </interactant>
    <interactant intactId="EBI-10187270">
        <id>Q9Y2J4-4</id>
        <label>AMOTL2</label>
    </interactant>
    <organismsDiffer>false</organismsDiffer>
    <experiments>3</experiments>
</comment>
<comment type="interaction">
    <interactant intactId="EBI-1055693">
        <id>O75771</id>
    </interactant>
    <interactant intactId="EBI-621372">
        <id>P54132</id>
        <label>BLM</label>
    </interactant>
    <organismsDiffer>false</organismsDiffer>
    <experiments>4</experiments>
</comment>
<comment type="interaction">
    <interactant intactId="EBI-1055693">
        <id>O75771</id>
    </interactant>
    <interactant intactId="EBI-946029">
        <id>Q6P1W5</id>
        <label>C1orf94</label>
    </interactant>
    <organismsDiffer>false</organismsDiffer>
    <experiments>6</experiments>
</comment>
<comment type="interaction">
    <interactant intactId="EBI-1055693">
        <id>O75771</id>
    </interactant>
    <interactant intactId="EBI-740841">
        <id>Q8N5R6</id>
        <label>CCDC33</label>
    </interactant>
    <organismsDiffer>false</organismsDiffer>
    <experiments>3</experiments>
</comment>
<comment type="interaction">
    <interactant intactId="EBI-1055693">
        <id>O75771</id>
    </interactant>
    <interactant intactId="EBI-2836773">
        <id>Q9UK58</id>
        <label>CCNL1</label>
    </interactant>
    <organismsDiffer>false</organismsDiffer>
    <experiments>3</experiments>
</comment>
<comment type="interaction">
    <interactant intactId="EBI-1055693">
        <id>O75771</id>
    </interactant>
    <interactant intactId="EBI-12696312">
        <id>Q6P2R3</id>
        <label>CEP57L1</label>
    </interactant>
    <organismsDiffer>false</organismsDiffer>
    <experiments>3</experiments>
</comment>
<comment type="interaction">
    <interactant intactId="EBI-1055693">
        <id>O75771</id>
    </interactant>
    <interactant intactId="EBI-10181988">
        <id>Q8IYX8-2</id>
        <label>CEP57L1</label>
    </interactant>
    <organismsDiffer>false</organismsDiffer>
    <experiments>3</experiments>
</comment>
<comment type="interaction">
    <interactant intactId="EBI-1055693">
        <id>O75771</id>
    </interactant>
    <interactant intactId="EBI-2349927">
        <id>Q5JST6</id>
        <label>EFHC2</label>
    </interactant>
    <organismsDiffer>false</organismsDiffer>
    <experiments>3</experiments>
</comment>
<comment type="interaction">
    <interactant intactId="EBI-1055693">
        <id>O75771</id>
    </interactant>
    <interactant intactId="EBI-356700">
        <id>P57678</id>
        <label>GEMIN4</label>
    </interactant>
    <organismsDiffer>false</organismsDiffer>
    <experiments>3</experiments>
</comment>
<comment type="interaction">
    <interactant intactId="EBI-1055693">
        <id>O75771</id>
    </interactant>
    <interactant intactId="EBI-7116203">
        <id>O75031</id>
        <label>HSF2BP</label>
    </interactant>
    <organismsDiffer>false</organismsDiffer>
    <experiments>3</experiments>
</comment>
<comment type="interaction">
    <interactant intactId="EBI-1055693">
        <id>O75771</id>
    </interactant>
    <interactant intactId="EBI-8638439">
        <id>Q8IYA8</id>
        <label>IHO1</label>
    </interactant>
    <organismsDiffer>false</organismsDiffer>
    <experiments>6</experiments>
</comment>
<comment type="interaction">
    <interactant intactId="EBI-1055693">
        <id>O75771</id>
    </interactant>
    <interactant intactId="EBI-745305">
        <id>Q13422</id>
        <label>IKZF1</label>
    </interactant>
    <organismsDiffer>false</organismsDiffer>
    <experiments>5</experiments>
</comment>
<comment type="interaction">
    <interactant intactId="EBI-1055693">
        <id>O75771</id>
    </interactant>
    <interactant intactId="EBI-11522367">
        <id>Q13422-7</id>
        <label>IKZF1</label>
    </interactant>
    <organismsDiffer>false</organismsDiffer>
    <experiments>3</experiments>
</comment>
<comment type="interaction">
    <interactant intactId="EBI-1055693">
        <id>O75771</id>
    </interactant>
    <interactant intactId="EBI-747204">
        <id>Q9UKT9</id>
        <label>IKZF3</label>
    </interactant>
    <organismsDiffer>false</organismsDiffer>
    <experiments>11</experiments>
</comment>
<comment type="interaction">
    <interactant intactId="EBI-1055693">
        <id>O75771</id>
    </interactant>
    <interactant intactId="EBI-715394">
        <id>Q9H079</id>
        <label>KATNBL1</label>
    </interactant>
    <organismsDiffer>false</organismsDiffer>
    <experiments>3</experiments>
</comment>
<comment type="interaction">
    <interactant intactId="EBI-1055693">
        <id>O75771</id>
    </interactant>
    <interactant intactId="EBI-11953930">
        <id>F5H3M2</id>
        <label>KIFC3</label>
    </interactant>
    <organismsDiffer>false</organismsDiffer>
    <experiments>3</experiments>
</comment>
<comment type="interaction">
    <interactant intactId="EBI-1055693">
        <id>O75771</id>
    </interactant>
    <interactant intactId="EBI-2125614">
        <id>Q9BVG8</id>
        <label>KIFC3</label>
    </interactant>
    <organismsDiffer>false</organismsDiffer>
    <experiments>4</experiments>
</comment>
<comment type="interaction">
    <interactant intactId="EBI-1055693">
        <id>O75771</id>
    </interactant>
    <interactant intactId="EBI-14069005">
        <id>Q9BVG8-5</id>
        <label>KIFC3</label>
    </interactant>
    <organismsDiffer>false</organismsDiffer>
    <experiments>3</experiments>
</comment>
<comment type="interaction">
    <interactant intactId="EBI-1055693">
        <id>O75771</id>
    </interactant>
    <interactant intactId="EBI-739566">
        <id>P19012</id>
        <label>KRT15</label>
    </interactant>
    <organismsDiffer>false</organismsDiffer>
    <experiments>7</experiments>
</comment>
<comment type="interaction">
    <interactant intactId="EBI-1055693">
        <id>O75771</id>
    </interactant>
    <interactant intactId="EBI-12864460">
        <id>P48059-3</id>
        <label>LIMS1</label>
    </interactant>
    <organismsDiffer>false</organismsDiffer>
    <experiments>3</experiments>
</comment>
<comment type="interaction">
    <interactant intactId="EBI-1055693">
        <id>O75771</id>
    </interactant>
    <interactant intactId="EBI-739832">
        <id>Q8TBB1</id>
        <label>LNX1</label>
    </interactant>
    <organismsDiffer>false</organismsDiffer>
    <experiments>6</experiments>
</comment>
<comment type="interaction">
    <interactant intactId="EBI-1055693">
        <id>O75771</id>
    </interactant>
    <interactant intactId="EBI-741037">
        <id>Q9BRK4</id>
        <label>LZTS2</label>
    </interactant>
    <organismsDiffer>false</organismsDiffer>
    <experiments>9</experiments>
</comment>
<comment type="interaction">
    <interactant intactId="EBI-1055693">
        <id>O75771</id>
    </interactant>
    <interactant intactId="EBI-717887">
        <id>Q9UPT6</id>
        <label>MAPK8IP3</label>
    </interactant>
    <organismsDiffer>false</organismsDiffer>
    <experiments>3</experiments>
</comment>
<comment type="interaction">
    <interactant intactId="EBI-1055693">
        <id>O75771</id>
    </interactant>
    <interactant intactId="EBI-16439278">
        <id>Q6FHY5</id>
        <label>MEOX2</label>
    </interactant>
    <organismsDiffer>false</organismsDiffer>
    <experiments>3</experiments>
</comment>
<comment type="interaction">
    <interactant intactId="EBI-1055693">
        <id>O75771</id>
    </interactant>
    <interactant intactId="EBI-10271199">
        <id>Q8NI38</id>
        <label>NFKBID</label>
    </interactant>
    <organismsDiffer>false</organismsDiffer>
    <experiments>3</experiments>
</comment>
<comment type="interaction">
    <interactant intactId="EBI-1055693">
        <id>O75771</id>
    </interactant>
    <interactant intactId="EBI-79165">
        <id>Q9NRD5</id>
        <label>PICK1</label>
    </interactant>
    <organismsDiffer>false</organismsDiffer>
    <experiments>3</experiments>
</comment>
<comment type="interaction">
    <interactant intactId="EBI-1055693">
        <id>O75771</id>
    </interactant>
    <interactant intactId="EBI-302345">
        <id>Q8ND90</id>
        <label>PNMA1</label>
    </interactant>
    <organismsDiffer>false</organismsDiffer>
    <experiments>3</experiments>
</comment>
<comment type="interaction">
    <interactant intactId="EBI-1055693">
        <id>O75771</id>
    </interactant>
    <interactant intactId="EBI-10276663">
        <id>Q8WUT1</id>
        <label>POLDIP3</label>
    </interactant>
    <organismsDiffer>false</organismsDiffer>
    <experiments>3</experiments>
</comment>
<comment type="interaction">
    <interactant intactId="EBI-1055693">
        <id>O75771</id>
    </interactant>
    <interactant intactId="EBI-3957793">
        <id>Q9GZV8</id>
        <label>PRDM14</label>
    </interactant>
    <organismsDiffer>false</organismsDiffer>
    <experiments>3</experiments>
</comment>
<comment type="interaction">
    <interactant intactId="EBI-1055693">
        <id>O75771</id>
    </interactant>
    <interactant intactId="EBI-11320284">
        <id>Q9NQX0</id>
        <label>PRDM6</label>
    </interactant>
    <organismsDiffer>false</organismsDiffer>
    <experiments>3</experiments>
</comment>
<comment type="interaction">
    <interactant intactId="EBI-1055693">
        <id>O75771</id>
    </interactant>
    <interactant intactId="EBI-2824089">
        <id>O15315</id>
        <label>RAD51B</label>
    </interactant>
    <organismsDiffer>false</organismsDiffer>
    <experiments>8</experiments>
</comment>
<comment type="interaction">
    <interactant intactId="EBI-1055693">
        <id>O75771</id>
    </interactant>
    <interactant intactId="EBI-2267048">
        <id>O43502</id>
        <label>RAD51C</label>
    </interactant>
    <organismsDiffer>false</organismsDiffer>
    <experiments>8</experiments>
</comment>
<comment type="interaction">
    <interactant intactId="EBI-1055693">
        <id>O75771</id>
    </interactant>
    <interactant intactId="EBI-473821">
        <id>Q5RL73</id>
        <label>RBM48</label>
    </interactant>
    <organismsDiffer>false</organismsDiffer>
    <experiments>3</experiments>
</comment>
<comment type="interaction">
    <interactant intactId="EBI-1055693">
        <id>O75771</id>
    </interactant>
    <interactant intactId="EBI-10829018">
        <id>Q04864-2</id>
        <label>REL</label>
    </interactant>
    <organismsDiffer>false</organismsDiffer>
    <experiments>3</experiments>
</comment>
<comment type="interaction">
    <interactant intactId="EBI-1055693">
        <id>O75771</id>
    </interactant>
    <interactant intactId="EBI-741237">
        <id>O60504</id>
        <label>SORBS3</label>
    </interactant>
    <organismsDiffer>false</organismsDiffer>
    <experiments>3</experiments>
</comment>
<comment type="interaction">
    <interactant intactId="EBI-1055693">
        <id>O75771</id>
    </interactant>
    <interactant intactId="EBI-11995806">
        <id>Q9H0A9-2</id>
        <label>SPATC1L</label>
    </interactant>
    <organismsDiffer>false</organismsDiffer>
    <experiments>3</experiments>
</comment>
<comment type="interaction">
    <interactant intactId="EBI-1055693">
        <id>O75771</id>
    </interactant>
    <interactant intactId="EBI-714135">
        <id>O75558</id>
        <label>STX11</label>
    </interactant>
    <organismsDiffer>false</organismsDiffer>
    <experiments>3</experiments>
</comment>
<comment type="interaction">
    <interactant intactId="EBI-1055693">
        <id>O75771</id>
    </interactant>
    <interactant intactId="EBI-5281637">
        <id>Q6NVH7</id>
        <label>SWSAP1</label>
    </interactant>
    <organismsDiffer>false</organismsDiffer>
    <experiments>2</experiments>
</comment>
<comment type="interaction">
    <interactant intactId="EBI-1055693">
        <id>O75771</id>
    </interactant>
    <interactant intactId="EBI-13636688">
        <id>P15884-3</id>
        <label>TCF4</label>
    </interactant>
    <organismsDiffer>false</organismsDiffer>
    <experiments>3</experiments>
</comment>
<comment type="interaction">
    <interactant intactId="EBI-1055693">
        <id>O75771</id>
    </interactant>
    <interactant intactId="EBI-11139477">
        <id>Q96N21</id>
        <label>TEPSIN</label>
    </interactant>
    <organismsDiffer>false</organismsDiffer>
    <experiments>3</experiments>
</comment>
<comment type="interaction">
    <interactant intactId="EBI-1055693">
        <id>O75771</id>
    </interactant>
    <interactant intactId="EBI-11741437">
        <id>Q08117-2</id>
        <label>TLE5</label>
    </interactant>
    <organismsDiffer>false</organismsDiffer>
    <experiments>3</experiments>
</comment>
<comment type="interaction">
    <interactant intactId="EBI-1055693">
        <id>O75771</id>
    </interactant>
    <interactant intactId="EBI-2820256">
        <id>Q14142</id>
        <label>TRIM14</label>
    </interactant>
    <organismsDiffer>false</organismsDiffer>
    <experiments>3</experiments>
</comment>
<comment type="interaction">
    <interactant intactId="EBI-1055693">
        <id>O75771</id>
    </interactant>
    <interactant intactId="EBI-9090990">
        <id>Q5W5X9-3</id>
        <label>TTC23</label>
    </interactant>
    <organismsDiffer>false</organismsDiffer>
    <experiments>3</experiments>
</comment>
<comment type="interaction">
    <interactant intactId="EBI-1055693">
        <id>O75771</id>
    </interactant>
    <interactant intactId="EBI-9031083">
        <id>Q9Y2B5</id>
        <label>VPS9D1</label>
    </interactant>
    <organismsDiffer>false</organismsDiffer>
    <experiments>3</experiments>
</comment>
<comment type="interaction">
    <interactant intactId="EBI-1055693">
        <id>O75771</id>
    </interactant>
    <interactant intactId="EBI-3918457">
        <id>O43543</id>
        <label>XRCC2</label>
    </interactant>
    <organismsDiffer>false</organismsDiffer>
    <experiments>41</experiments>
</comment>
<comment type="interaction">
    <interactant intactId="EBI-1055693">
        <id>O75771</id>
    </interactant>
    <interactant intactId="EBI-12287587">
        <id>B2RXF5</id>
        <label>ZBTB42</label>
    </interactant>
    <organismsDiffer>false</organismsDiffer>
    <experiments>3</experiments>
</comment>
<comment type="interaction">
    <interactant intactId="EBI-1055693">
        <id>O75771</id>
    </interactant>
    <interactant intactId="EBI-14104088">
        <id>Q53FD0-2</id>
        <label>ZC2HC1C</label>
    </interactant>
    <organismsDiffer>false</organismsDiffer>
    <experiments>3</experiments>
</comment>
<comment type="interaction">
    <interactant intactId="EBI-1055693">
        <id>O75771</id>
    </interactant>
    <interactant intactId="EBI-10252492">
        <id>Q6P1L6</id>
        <label>ZNF343</label>
    </interactant>
    <organismsDiffer>false</organismsDiffer>
    <experiments>3</experiments>
</comment>
<comment type="interaction">
    <interactant intactId="EBI-1055693">
        <id>O75771</id>
    </interactant>
    <interactant intactId="EBI-10251462">
        <id>Q6NX45</id>
        <label>ZNF774</label>
    </interactant>
    <organismsDiffer>false</organismsDiffer>
    <experiments>3</experiments>
</comment>
<comment type="subcellular location">
    <subcellularLocation>
        <location evidence="17">Nucleus</location>
    </subcellularLocation>
    <subcellularLocation>
        <location>Cytoplasm</location>
        <location>Cytoskeleton</location>
        <location>Microtubule organizing center</location>
        <location>Centrosome</location>
    </subcellularLocation>
    <subcellularLocation>
        <location>Chromosome</location>
        <location>Telomere</location>
    </subcellularLocation>
</comment>
<comment type="alternative products">
    <event type="alternative splicing"/>
    <isoform>
        <id>O75771-1</id>
        <name>1</name>
        <name>TRAD</name>
        <sequence type="displayed"/>
    </isoform>
    <isoform>
        <id>O75771-2</id>
        <name>2</name>
        <name>TRAD-D1</name>
        <name>D2</name>
        <sequence type="described" ref="VSP_005558 VSP_005559"/>
    </isoform>
    <isoform>
        <id>O75771-3</id>
        <name>3</name>
        <name>TRAD-D3</name>
        <sequence type="described" ref="VSP_005560"/>
    </isoform>
    <isoform>
        <id>O75771-4</id>
        <name>4</name>
        <name>TRAD-D4</name>
        <sequence type="described" ref="VSP_005561"/>
    </isoform>
    <isoform>
        <id>O75771-5</id>
        <name>5</name>
        <name>TRAD-D5</name>
        <sequence type="described" ref="VSP_005562"/>
    </isoform>
    <isoform>
        <id>O75771-6</id>
        <name>6</name>
        <name>TRAD-D6</name>
        <name>D7</name>
        <sequence type="described" ref="VSP_005563 VSP_005564"/>
    </isoform>
    <isoform>
        <id>O75771-7</id>
        <name>7</name>
        <name>TRAD-D8</name>
        <sequence type="described" ref="VSP_005565 VSP_005566"/>
    </isoform>
    <isoform>
        <id>O75771-8</id>
        <name>8</name>
        <sequence type="described" ref="VSP_043658"/>
    </isoform>
</comment>
<comment type="tissue specificity">
    <text>Expressed in colon, prostate, spleen, testis, ovary, thymus and small intestine. Weakly expressed in leukocytes.</text>
</comment>
<comment type="disease" evidence="11">
    <disease id="DI-03288">
        <name>Breast-ovarian cancer, familial, 4</name>
        <acronym>BROVCA4</acronym>
        <description>A condition associated with familial predisposition to cancer of the breast and ovaries. Characteristic features in affected families are an early age of onset of breast cancer (often before age 50), increased chance of bilateral cancers (cancer that develop in both breasts, or both ovaries, independently), frequent occurrence of breast cancer among men, increased incidence of tumors of other specific organs, such as the prostate.</description>
        <dbReference type="MIM" id="614291"/>
    </disease>
    <text>Disease susceptibility is associated with variants affecting the gene represented in this entry.</text>
</comment>
<comment type="miscellaneous">
    <molecule>Isoform 2</molecule>
    <text evidence="17">May be produced at very low levels due to a premature stop codon in the mRNA, leading to nonsense-mediated mRNA decay.</text>
</comment>
<comment type="similarity">
    <text evidence="17">Belongs to the RecA family. RAD51 subfamily.</text>
</comment>
<comment type="online information" name="Atlas of Genetics and Cytogenetics in Oncology and Haematology">
    <link uri="https://atlasgeneticsoncology.org/gene/347/RAD51L3"/>
</comment>
<reference key="1">
    <citation type="journal article" date="1998" name="Nucleic Acids Res.">
        <title>Isolation of novel human and mouse genes of the recA/RAD51 recombination-repair gene family.</title>
        <authorList>
            <person name="Cartwright R."/>
            <person name="Dunn A.M."/>
            <person name="Simpson P.J."/>
            <person name="Tambini C.E."/>
            <person name="Thacker J."/>
        </authorList>
    </citation>
    <scope>NUCLEOTIDE SEQUENCE [MRNA] (ISOFORM 1)</scope>
</reference>
<reference key="2">
    <citation type="journal article" date="1998" name="Genomics">
        <title>Identification, characterization, and genetic mapping of Rad51d, a new mouse and human RAD51/RecA-related gene.</title>
        <authorList>
            <person name="Pittman D.L."/>
            <person name="Weinberg L.R."/>
            <person name="Schimenti J.C."/>
        </authorList>
    </citation>
    <scope>NUCLEOTIDE SEQUENCE [MRNA] (ISOFORM 1)</scope>
</reference>
<reference key="3">
    <citation type="journal article" date="1999" name="Biochem. Biophys. Res. Commun.">
        <title>Multiple alternative transcripts of the human homologue of the mouse TRAD/R51H3/RAD51D gene, a member of the recA/RAD51 gene family.</title>
        <authorList>
            <person name="Kawabata M."/>
            <person name="Saeki K."/>
        </authorList>
    </citation>
    <scope>NUCLEOTIDE SEQUENCE [MRNA]</scope>
    <scope>ALTERNATIVE SPLICING (ISOFORMS 2; 3; 4; 5; 6 AND 7)</scope>
    <source>
        <tissue>Brain</tissue>
    </source>
</reference>
<reference key="4">
    <citation type="submission" date="2004-05" db="EMBL/GenBank/DDBJ databases">
        <authorList>
            <consortium name="NIEHS SNPs program"/>
        </authorList>
    </citation>
    <scope>NUCLEOTIDE SEQUENCE [GENOMIC DNA]</scope>
    <scope>VARIANTS SER-24; GLN-165; THR-225; GLN-232 AND GLY-233</scope>
</reference>
<reference key="5">
    <citation type="journal article" date="2004" name="Nat. Genet.">
        <title>Complete sequencing and characterization of 21,243 full-length human cDNAs.</title>
        <authorList>
            <person name="Ota T."/>
            <person name="Suzuki Y."/>
            <person name="Nishikawa T."/>
            <person name="Otsuki T."/>
            <person name="Sugiyama T."/>
            <person name="Irie R."/>
            <person name="Wakamatsu A."/>
            <person name="Hayashi K."/>
            <person name="Sato H."/>
            <person name="Nagai K."/>
            <person name="Kimura K."/>
            <person name="Makita H."/>
            <person name="Sekine M."/>
            <person name="Obayashi M."/>
            <person name="Nishi T."/>
            <person name="Shibahara T."/>
            <person name="Tanaka T."/>
            <person name="Ishii S."/>
            <person name="Yamamoto J."/>
            <person name="Saito K."/>
            <person name="Kawai Y."/>
            <person name="Isono Y."/>
            <person name="Nakamura Y."/>
            <person name="Nagahari K."/>
            <person name="Murakami K."/>
            <person name="Yasuda T."/>
            <person name="Iwayanagi T."/>
            <person name="Wagatsuma M."/>
            <person name="Shiratori A."/>
            <person name="Sudo H."/>
            <person name="Hosoiri T."/>
            <person name="Kaku Y."/>
            <person name="Kodaira H."/>
            <person name="Kondo H."/>
            <person name="Sugawara M."/>
            <person name="Takahashi M."/>
            <person name="Kanda K."/>
            <person name="Yokoi T."/>
            <person name="Furuya T."/>
            <person name="Kikkawa E."/>
            <person name="Omura Y."/>
            <person name="Abe K."/>
            <person name="Kamihara K."/>
            <person name="Katsuta N."/>
            <person name="Sato K."/>
            <person name="Tanikawa M."/>
            <person name="Yamazaki M."/>
            <person name="Ninomiya K."/>
            <person name="Ishibashi T."/>
            <person name="Yamashita H."/>
            <person name="Murakawa K."/>
            <person name="Fujimori K."/>
            <person name="Tanai H."/>
            <person name="Kimata M."/>
            <person name="Watanabe M."/>
            <person name="Hiraoka S."/>
            <person name="Chiba Y."/>
            <person name="Ishida S."/>
            <person name="Ono Y."/>
            <person name="Takiguchi S."/>
            <person name="Watanabe S."/>
            <person name="Yosida M."/>
            <person name="Hotuta T."/>
            <person name="Kusano J."/>
            <person name="Kanehori K."/>
            <person name="Takahashi-Fujii A."/>
            <person name="Hara H."/>
            <person name="Tanase T.-O."/>
            <person name="Nomura Y."/>
            <person name="Togiya S."/>
            <person name="Komai F."/>
            <person name="Hara R."/>
            <person name="Takeuchi K."/>
            <person name="Arita M."/>
            <person name="Imose N."/>
            <person name="Musashino K."/>
            <person name="Yuuki H."/>
            <person name="Oshima A."/>
            <person name="Sasaki N."/>
            <person name="Aotsuka S."/>
            <person name="Yoshikawa Y."/>
            <person name="Matsunawa H."/>
            <person name="Ichihara T."/>
            <person name="Shiohata N."/>
            <person name="Sano S."/>
            <person name="Moriya S."/>
            <person name="Momiyama H."/>
            <person name="Satoh N."/>
            <person name="Takami S."/>
            <person name="Terashima Y."/>
            <person name="Suzuki O."/>
            <person name="Nakagawa S."/>
            <person name="Senoh A."/>
            <person name="Mizoguchi H."/>
            <person name="Goto Y."/>
            <person name="Shimizu F."/>
            <person name="Wakebe H."/>
            <person name="Hishigaki H."/>
            <person name="Watanabe T."/>
            <person name="Sugiyama A."/>
            <person name="Takemoto M."/>
            <person name="Kawakami B."/>
            <person name="Yamazaki M."/>
            <person name="Watanabe K."/>
            <person name="Kumagai A."/>
            <person name="Itakura S."/>
            <person name="Fukuzumi Y."/>
            <person name="Fujimori Y."/>
            <person name="Komiyama M."/>
            <person name="Tashiro H."/>
            <person name="Tanigami A."/>
            <person name="Fujiwara T."/>
            <person name="Ono T."/>
            <person name="Yamada K."/>
            <person name="Fujii Y."/>
            <person name="Ozaki K."/>
            <person name="Hirao M."/>
            <person name="Ohmori Y."/>
            <person name="Kawabata A."/>
            <person name="Hikiji T."/>
            <person name="Kobatake N."/>
            <person name="Inagaki H."/>
            <person name="Ikema Y."/>
            <person name="Okamoto S."/>
            <person name="Okitani R."/>
            <person name="Kawakami T."/>
            <person name="Noguchi S."/>
            <person name="Itoh T."/>
            <person name="Shigeta K."/>
            <person name="Senba T."/>
            <person name="Matsumura K."/>
            <person name="Nakajima Y."/>
            <person name="Mizuno T."/>
            <person name="Morinaga M."/>
            <person name="Sasaki M."/>
            <person name="Togashi T."/>
            <person name="Oyama M."/>
            <person name="Hata H."/>
            <person name="Watanabe M."/>
            <person name="Komatsu T."/>
            <person name="Mizushima-Sugano J."/>
            <person name="Satoh T."/>
            <person name="Shirai Y."/>
            <person name="Takahashi Y."/>
            <person name="Nakagawa K."/>
            <person name="Okumura K."/>
            <person name="Nagase T."/>
            <person name="Nomura N."/>
            <person name="Kikuchi H."/>
            <person name="Masuho Y."/>
            <person name="Yamashita R."/>
            <person name="Nakai K."/>
            <person name="Yada T."/>
            <person name="Nakamura Y."/>
            <person name="Ohara O."/>
            <person name="Isogai T."/>
            <person name="Sugano S."/>
        </authorList>
    </citation>
    <scope>NUCLEOTIDE SEQUENCE [LARGE SCALE MRNA] (ISOFORM 8)</scope>
    <source>
        <tissue>Thalamus</tissue>
    </source>
</reference>
<reference key="6">
    <citation type="journal article" date="2006" name="Nature">
        <title>DNA sequence of human chromosome 17 and analysis of rearrangement in the human lineage.</title>
        <authorList>
            <person name="Zody M.C."/>
            <person name="Garber M."/>
            <person name="Adams D.J."/>
            <person name="Sharpe T."/>
            <person name="Harrow J."/>
            <person name="Lupski J.R."/>
            <person name="Nicholson C."/>
            <person name="Searle S.M."/>
            <person name="Wilming L."/>
            <person name="Young S.K."/>
            <person name="Abouelleil A."/>
            <person name="Allen N.R."/>
            <person name="Bi W."/>
            <person name="Bloom T."/>
            <person name="Borowsky M.L."/>
            <person name="Bugalter B.E."/>
            <person name="Butler J."/>
            <person name="Chang J.L."/>
            <person name="Chen C.-K."/>
            <person name="Cook A."/>
            <person name="Corum B."/>
            <person name="Cuomo C.A."/>
            <person name="de Jong P.J."/>
            <person name="DeCaprio D."/>
            <person name="Dewar K."/>
            <person name="FitzGerald M."/>
            <person name="Gilbert J."/>
            <person name="Gibson R."/>
            <person name="Gnerre S."/>
            <person name="Goldstein S."/>
            <person name="Grafham D.V."/>
            <person name="Grocock R."/>
            <person name="Hafez N."/>
            <person name="Hagopian D.S."/>
            <person name="Hart E."/>
            <person name="Norman C.H."/>
            <person name="Humphray S."/>
            <person name="Jaffe D.B."/>
            <person name="Jones M."/>
            <person name="Kamal M."/>
            <person name="Khodiyar V.K."/>
            <person name="LaButti K."/>
            <person name="Laird G."/>
            <person name="Lehoczky J."/>
            <person name="Liu X."/>
            <person name="Lokyitsang T."/>
            <person name="Loveland J."/>
            <person name="Lui A."/>
            <person name="Macdonald P."/>
            <person name="Major J.E."/>
            <person name="Matthews L."/>
            <person name="Mauceli E."/>
            <person name="McCarroll S.A."/>
            <person name="Mihalev A.H."/>
            <person name="Mudge J."/>
            <person name="Nguyen C."/>
            <person name="Nicol R."/>
            <person name="O'Leary S.B."/>
            <person name="Osoegawa K."/>
            <person name="Schwartz D.C."/>
            <person name="Shaw-Smith C."/>
            <person name="Stankiewicz P."/>
            <person name="Steward C."/>
            <person name="Swarbreck D."/>
            <person name="Venkataraman V."/>
            <person name="Whittaker C.A."/>
            <person name="Yang X."/>
            <person name="Zimmer A.R."/>
            <person name="Bradley A."/>
            <person name="Hubbard T."/>
            <person name="Birren B.W."/>
            <person name="Rogers J."/>
            <person name="Lander E.S."/>
            <person name="Nusbaum C."/>
        </authorList>
    </citation>
    <scope>NUCLEOTIDE SEQUENCE [LARGE SCALE GENOMIC DNA]</scope>
</reference>
<reference key="7">
    <citation type="submission" date="2005-09" db="EMBL/GenBank/DDBJ databases">
        <authorList>
            <person name="Mural R.J."/>
            <person name="Istrail S."/>
            <person name="Sutton G.G."/>
            <person name="Florea L."/>
            <person name="Halpern A.L."/>
            <person name="Mobarry C.M."/>
            <person name="Lippert R."/>
            <person name="Walenz B."/>
            <person name="Shatkay H."/>
            <person name="Dew I."/>
            <person name="Miller J.R."/>
            <person name="Flanigan M.J."/>
            <person name="Edwards N.J."/>
            <person name="Bolanos R."/>
            <person name="Fasulo D."/>
            <person name="Halldorsson B.V."/>
            <person name="Hannenhalli S."/>
            <person name="Turner R."/>
            <person name="Yooseph S."/>
            <person name="Lu F."/>
            <person name="Nusskern D.R."/>
            <person name="Shue B.C."/>
            <person name="Zheng X.H."/>
            <person name="Zhong F."/>
            <person name="Delcher A.L."/>
            <person name="Huson D.H."/>
            <person name="Kravitz S.A."/>
            <person name="Mouchard L."/>
            <person name="Reinert K."/>
            <person name="Remington K.A."/>
            <person name="Clark A.G."/>
            <person name="Waterman M.S."/>
            <person name="Eichler E.E."/>
            <person name="Adams M.D."/>
            <person name="Hunkapiller M.W."/>
            <person name="Myers E.W."/>
            <person name="Venter J.C."/>
        </authorList>
    </citation>
    <scope>NUCLEOTIDE SEQUENCE [LARGE SCALE GENOMIC DNA]</scope>
</reference>
<reference key="8">
    <citation type="journal article" date="2004" name="Genome Res.">
        <title>The status, quality, and expansion of the NIH full-length cDNA project: the Mammalian Gene Collection (MGC).</title>
        <authorList>
            <consortium name="The MGC Project Team"/>
        </authorList>
    </citation>
    <scope>NUCLEOTIDE SEQUENCE [LARGE SCALE MRNA] (ISOFORM 1)</scope>
    <source>
        <tissue>Skin</tissue>
    </source>
</reference>
<reference key="9">
    <citation type="journal article" date="2007" name="BMC Genomics">
        <title>The full-ORF clone resource of the German cDNA consortium.</title>
        <authorList>
            <person name="Bechtel S."/>
            <person name="Rosenfelder H."/>
            <person name="Duda A."/>
            <person name="Schmidt C.P."/>
            <person name="Ernst U."/>
            <person name="Wellenreuther R."/>
            <person name="Mehrle A."/>
            <person name="Schuster C."/>
            <person name="Bahr A."/>
            <person name="Bloecker H."/>
            <person name="Heubner D."/>
            <person name="Hoerlein A."/>
            <person name="Michel G."/>
            <person name="Wedler H."/>
            <person name="Koehrer K."/>
            <person name="Ottenwaelder B."/>
            <person name="Poustka A."/>
            <person name="Wiemann S."/>
            <person name="Schupp I."/>
        </authorList>
    </citation>
    <scope>NUCLEOTIDE SEQUENCE [LARGE SCALE MRNA] OF 156-328</scope>
    <source>
        <tissue>Uterus</tissue>
    </source>
</reference>
<reference key="10">
    <citation type="journal article" date="2000" name="J. Biol. Chem.">
        <title>The RAD51 family member, RAD51L3, is a DNA-stimulated ATPase that forms a complex with XRCC2.</title>
        <authorList>
            <person name="Braybrooke J.P."/>
            <person name="Spink K.G."/>
            <person name="Thacker J."/>
            <person name="Hickson I.D."/>
        </authorList>
    </citation>
    <scope>FUNCTION</scope>
    <scope>INTERACTION WITH XRCC2</scope>
</reference>
<reference key="11">
    <citation type="journal article" date="2001" name="Genes Dev.">
        <title>Identification and purification of two distinct complexes containing the five RAD51 paralogs.</title>
        <authorList>
            <person name="Masson J.Y."/>
            <person name="Tarsounas M.C."/>
            <person name="Stasiak A.Z."/>
            <person name="Stasiak A."/>
            <person name="Shah R."/>
            <person name="McIlwraith M.J."/>
            <person name="Benson F.E."/>
            <person name="West S.C."/>
        </authorList>
    </citation>
    <scope>FUNCTION</scope>
    <scope>IDENTIFICATION IN A COMPLEX WITH RAD51C; RAD51D AND XRCC2</scope>
</reference>
<reference key="12">
    <citation type="journal article" date="2002" name="J. Biol. Chem.">
        <title>Homologous pairing and ring and filament structure formation activities of the human Xrcc2*Rad51D complex.</title>
        <authorList>
            <person name="Kurumizaka H."/>
            <person name="Ikawa S."/>
            <person name="Nakada M."/>
            <person name="Enomoto R."/>
            <person name="Kagawa W."/>
            <person name="Kinebuchi T."/>
            <person name="Yamazoe M."/>
            <person name="Yokoyama S."/>
            <person name="Shibata T."/>
        </authorList>
    </citation>
    <scope>FUNCTION</scope>
    <scope>SUBUNIT</scope>
</reference>
<reference key="13">
    <citation type="journal article" date="2002" name="Nucleic Acids Res.">
        <title>Involvement of Rad51C in two distinct protein complexes of Rad51 paralogs in human cells.</title>
        <authorList>
            <person name="Liu N."/>
            <person name="Schild D."/>
            <person name="Thelen M.P."/>
            <person name="Thompson L.H."/>
        </authorList>
    </citation>
    <scope>FUNCTION</scope>
    <scope>IDENTIFICATION IN A COMPLEX WITH RAD51C; RAD51D AND XRCC2</scope>
</reference>
<reference key="14">
    <citation type="journal article" date="2002" name="J. Biol. Chem.">
        <title>RAD51C interacts with RAD51B and is central to a larger protein complex in vivo exclusive of RAD51.</title>
        <authorList>
            <person name="Miller K.A."/>
            <person name="Yoshikawa D.M."/>
            <person name="McConnell I.R."/>
            <person name="Clark R."/>
            <person name="Schild D."/>
            <person name="Albala J.S."/>
        </authorList>
    </citation>
    <scope>SUBUNIT</scope>
</reference>
<reference key="15">
    <citation type="journal article" date="2002" name="Nucleic Acids Res.">
        <title>Interactions involving the Rad51 paralogs Rad51C and XRCC3 in human cells.</title>
        <authorList>
            <person name="Wiese C."/>
            <person name="Collins D.W."/>
            <person name="Albala J.S."/>
            <person name="Thompson L.H."/>
            <person name="Kronenberg A."/>
            <person name="Schild D."/>
        </authorList>
    </citation>
    <scope>IDENTIFICATION IN A COMPLEX WITH RAD51C; RAD51D AND XRCC2</scope>
</reference>
<reference key="16">
    <citation type="journal article" date="2003" name="J. Biol. Chem.">
        <title>Functional interaction between the Bloom's syndrome helicase and the RAD51 paralog, RAD51L3 (RAD51D).</title>
        <authorList>
            <person name="Braybrooke J.P."/>
            <person name="Li J.L."/>
            <person name="Wu L."/>
            <person name="Caple F."/>
            <person name="Benson F.E."/>
            <person name="Hickson I.D."/>
        </authorList>
    </citation>
    <scope>FUNCTION OF THE BCDX2 COMPLEX</scope>
    <scope>INTERACTION WITH BLM AND XRCC2</scope>
</reference>
<reference key="17">
    <citation type="journal article" date="2004" name="Cell">
        <title>Telomere maintenance requires the RAD51D recombination/repair protein.</title>
        <authorList>
            <person name="Tarsounas M."/>
            <person name="Munoz P."/>
            <person name="Claas A."/>
            <person name="Smiraldo P.G."/>
            <person name="Pittman D.L."/>
            <person name="Blasco M.A."/>
            <person name="West S.C."/>
        </authorList>
    </citation>
    <scope>FUNCTION</scope>
    <scope>SUBCELLULAR LOCATION</scope>
</reference>
<reference key="18">
    <citation type="journal article" date="2004" name="Genome Biol.">
        <title>An unappreciated role for RNA surveillance.</title>
        <authorList>
            <person name="Hillman R.T."/>
            <person name="Green R.E."/>
            <person name="Brenner S.E."/>
        </authorList>
    </citation>
    <scope>SPLICE ISOFORM(S) THAT ARE POTENTIAL NMD TARGET(S)</scope>
</reference>
<reference key="19">
    <citation type="journal article" date="2006" name="EMBO J.">
        <title>Sws1 is a conserved regulator of homologous recombination in eukaryotic cells.</title>
        <authorList>
            <person name="Martin V."/>
            <person name="Chahwan C."/>
            <person name="Gao H."/>
            <person name="Blais V."/>
            <person name="Wohlschlegel J."/>
            <person name="Yates J.R. III"/>
            <person name="McGowan C.H."/>
            <person name="Russell P."/>
        </authorList>
    </citation>
    <scope>INTERACTION WITH ZSWIM7 AND XRCC2</scope>
</reference>
<reference key="20">
    <citation type="journal article" date="2011" name="Exp. Cell Res.">
        <title>Homologous recombination proteins are associated with centrosomes and are required for mitotic stability.</title>
        <authorList>
            <person name="Cappelli E."/>
            <person name="Townsend S."/>
            <person name="Griffin C."/>
            <person name="Thacker J."/>
        </authorList>
    </citation>
    <scope>SUBCELLULAR LOCATION</scope>
</reference>
<reference key="21">
    <citation type="journal article" date="2011" name="J. Biol. Chem.">
        <title>hSWS1.SWSAP1 is an evolutionarily conserved complex required for efficient homologous recombination repair.</title>
        <authorList>
            <person name="Liu T."/>
            <person name="Wan L."/>
            <person name="Wu Y."/>
            <person name="Chen J."/>
            <person name="Huang J."/>
        </authorList>
    </citation>
    <scope>INTERACTION WITH SWSAP1 AND ZSWIM7</scope>
</reference>
<reference key="22">
    <citation type="journal article" date="2011" name="Nat. Genet.">
        <title>Germline mutations in RAD51D confer susceptibility to ovarian cancer.</title>
        <authorList>
            <person name="Loveday C."/>
            <person name="Turnbull C."/>
            <person name="Ramsay E."/>
            <person name="Hughes D."/>
            <person name="Ruark E."/>
            <person name="Frankum J.R."/>
            <person name="Bowden G."/>
            <person name="Kalmyrzaev B."/>
            <person name="Warren-Perry M."/>
            <person name="Snape K."/>
            <person name="Adlard J.W."/>
            <person name="Barwell J."/>
            <person name="Berg J."/>
            <person name="Brady A.F."/>
            <person name="Brewer C."/>
            <person name="Brice G."/>
            <person name="Chapman C."/>
            <person name="Cook J."/>
            <person name="Davidson R."/>
            <person name="Donaldson A."/>
            <person name="Douglas F."/>
            <person name="Greenhalgh L."/>
            <person name="Henderson A."/>
            <person name="Izatt L."/>
            <person name="Kumar A."/>
            <person name="Lalloo F."/>
            <person name="Miedzybrodzka Z."/>
            <person name="Morrison P.J."/>
            <person name="Paterson J."/>
            <person name="Porteous M."/>
            <person name="Rogers M.T."/>
            <person name="Shanley S."/>
            <person name="Walker L."/>
            <person name="Eccles D."/>
            <person name="Evans D.G."/>
            <person name="Renwick A."/>
            <person name="Seal S."/>
            <person name="Lord C.J."/>
            <person name="Ashworth A."/>
            <person name="Reis-Filho J.S."/>
            <person name="Antoniou A.C."/>
            <person name="Rahman N."/>
        </authorList>
    </citation>
    <scope>INVOLVEMENT IN BROVCA4</scope>
</reference>
<reference key="23">
    <citation type="journal article" date="2013" name="Mol. Cell. Biol.">
        <title>Rad51 paralog complexes BCDX2 and CX3 act at different stages in the BRCA1-BRCA2-dependent homologous recombination pathway.</title>
        <authorList>
            <person name="Chun J."/>
            <person name="Buechelmaier E.S."/>
            <person name="Powell S.N."/>
        </authorList>
    </citation>
    <scope>FUNCTION OF THE BCDX2 COMPLEX</scope>
</reference>
<reference key="24">
    <citation type="journal article" date="2011" name="Int. J. Biochem. Cell Biol.">
        <title>Structural and functional characterization of the N-terminal domain of human Rad51D.</title>
        <authorList>
            <person name="Kim Y.M."/>
            <person name="Choi B.S."/>
        </authorList>
    </citation>
    <scope>STRUCTURE BY NMR OF 1-83</scope>
    <scope>DNA-BINDING</scope>
</reference>
<reference key="25">
    <citation type="journal article" date="2017" name="J. Am. Soc. Nephrol.">
        <title>MAGI2 mutations cause congenital nephrotic syndrome.</title>
        <authorList>
            <consortium name="NephroS"/>
            <consortium name="UK study of Nephrotic Syndrome"/>
            <person name="Bierzynska A."/>
            <person name="Soderquest K."/>
            <person name="Dean P."/>
            <person name="Colby E."/>
            <person name="Rollason R."/>
            <person name="Jones C."/>
            <person name="Inward C.D."/>
            <person name="McCarthy H.J."/>
            <person name="Simpson M.A."/>
            <person name="Lord G.M."/>
            <person name="Williams M."/>
            <person name="Welsh G.I."/>
            <person name="Koziell A.B."/>
            <person name="Saleem M.A."/>
        </authorList>
    </citation>
    <scope>VARIANT SER-9</scope>
</reference>
<proteinExistence type="evidence at protein level"/>
<sequence>MGVLRVGLCPGLTEEMIQLLRSHRIKTVVDLVSADLEEVAQKCGLSYKALVALRRVLLAQFSAFPVNGADLYEELKTSTAILSTGIGSLDKLLDAGLYTGEVTEIVGGPGSGKTQVCLCMAANVAHGLQQNVLYVDSNGGLTASRLLQLLQAKTQDEEEQAEALRRIQVVHAFDIFQMLDVLQELRGTVAQQVTGSSGTVKVVVVDSVTAVVSPLLGGQQREGLALMMQLARELKTLARDLGMAVVVTNHITRDRDSGRLKPALGRSWSFVPSTRILLDTIEGAGASGGRRMACLAKSSRQPTGFQEMVDIGTWGTSEQSATLQGDQT</sequence>
<name>RA51D_HUMAN</name>
<protein>
    <recommendedName>
        <fullName>DNA repair protein RAD51 homolog 4</fullName>
    </recommendedName>
    <alternativeName>
        <fullName>R51H3</fullName>
    </alternativeName>
    <alternativeName>
        <fullName>RAD51 homolog D</fullName>
    </alternativeName>
    <alternativeName>
        <fullName>RAD51-like protein 3</fullName>
    </alternativeName>
    <alternativeName>
        <fullName>TRAD</fullName>
    </alternativeName>
</protein>
<accession>O75771</accession>
<accession>B4DJU7</accession>
<accession>E1P637</accession>
<accession>O43537</accession>
<accession>O60355</accession>
<accession>O75196</accession>
<accession>O75847</accession>
<accession>O75848</accession>
<accession>O76073</accession>
<accession>O76085</accession>
<accession>O94908</accession>
<accession>Q9UFU5</accession>
<keyword id="KW-0002">3D-structure</keyword>
<keyword id="KW-0025">Alternative splicing</keyword>
<keyword id="KW-0067">ATP-binding</keyword>
<keyword id="KW-0158">Chromosome</keyword>
<keyword id="KW-0963">Cytoplasm</keyword>
<keyword id="KW-0206">Cytoskeleton</keyword>
<keyword id="KW-0227">DNA damage</keyword>
<keyword id="KW-0233">DNA recombination</keyword>
<keyword id="KW-0234">DNA repair</keyword>
<keyword id="KW-0238">DNA-binding</keyword>
<keyword id="KW-0547">Nucleotide-binding</keyword>
<keyword id="KW-0539">Nucleus</keyword>
<keyword id="KW-1267">Proteomics identification</keyword>
<keyword id="KW-1185">Reference proteome</keyword>
<keyword id="KW-0779">Telomere</keyword>
<gene>
    <name type="primary">RAD51D</name>
    <name type="synonym">RAD51L3</name>
</gene>